<accession>Q9V3Y0</accession>
<accession>Q7K028</accession>
<name>ANR49_DROME</name>
<proteinExistence type="evidence at protein level"/>
<keyword id="KW-0040">ANK repeat</keyword>
<keyword id="KW-1003">Cell membrane</keyword>
<keyword id="KW-0963">Cytoplasm</keyword>
<keyword id="KW-0217">Developmental protein</keyword>
<keyword id="KW-0472">Membrane</keyword>
<keyword id="KW-1185">Reference proteome</keyword>
<keyword id="KW-0677">Repeat</keyword>
<gene>
    <name evidence="3 6" type="primary">Ankrd49</name>
    <name evidence="6" type="synonym">BG:DS00929.2</name>
    <name evidence="6" type="synonym">br10</name>
    <name evidence="6" type="synonym">l(2)35Be</name>
    <name evidence="6" type="synonym">l(2)br10</name>
    <name evidence="6" type="ORF">CG4140</name>
</gene>
<reference evidence="7" key="1">
    <citation type="journal article" date="2000" name="Science">
        <title>The genome sequence of Drosophila melanogaster.</title>
        <authorList>
            <person name="Adams M.D."/>
            <person name="Celniker S.E."/>
            <person name="Holt R.A."/>
            <person name="Evans C.A."/>
            <person name="Gocayne J.D."/>
            <person name="Amanatides P.G."/>
            <person name="Scherer S.E."/>
            <person name="Li P.W."/>
            <person name="Hoskins R.A."/>
            <person name="Galle R.F."/>
            <person name="George R.A."/>
            <person name="Lewis S.E."/>
            <person name="Richards S."/>
            <person name="Ashburner M."/>
            <person name="Henderson S.N."/>
            <person name="Sutton G.G."/>
            <person name="Wortman J.R."/>
            <person name="Yandell M.D."/>
            <person name="Zhang Q."/>
            <person name="Chen L.X."/>
            <person name="Brandon R.C."/>
            <person name="Rogers Y.-H.C."/>
            <person name="Blazej R.G."/>
            <person name="Champe M."/>
            <person name="Pfeiffer B.D."/>
            <person name="Wan K.H."/>
            <person name="Doyle C."/>
            <person name="Baxter E.G."/>
            <person name="Helt G."/>
            <person name="Nelson C.R."/>
            <person name="Miklos G.L.G."/>
            <person name="Abril J.F."/>
            <person name="Agbayani A."/>
            <person name="An H.-J."/>
            <person name="Andrews-Pfannkoch C."/>
            <person name="Baldwin D."/>
            <person name="Ballew R.M."/>
            <person name="Basu A."/>
            <person name="Baxendale J."/>
            <person name="Bayraktaroglu L."/>
            <person name="Beasley E.M."/>
            <person name="Beeson K.Y."/>
            <person name="Benos P.V."/>
            <person name="Berman B.P."/>
            <person name="Bhandari D."/>
            <person name="Bolshakov S."/>
            <person name="Borkova D."/>
            <person name="Botchan M.R."/>
            <person name="Bouck J."/>
            <person name="Brokstein P."/>
            <person name="Brottier P."/>
            <person name="Burtis K.C."/>
            <person name="Busam D.A."/>
            <person name="Butler H."/>
            <person name="Cadieu E."/>
            <person name="Center A."/>
            <person name="Chandra I."/>
            <person name="Cherry J.M."/>
            <person name="Cawley S."/>
            <person name="Dahlke C."/>
            <person name="Davenport L.B."/>
            <person name="Davies P."/>
            <person name="de Pablos B."/>
            <person name="Delcher A."/>
            <person name="Deng Z."/>
            <person name="Mays A.D."/>
            <person name="Dew I."/>
            <person name="Dietz S.M."/>
            <person name="Dodson K."/>
            <person name="Doup L.E."/>
            <person name="Downes M."/>
            <person name="Dugan-Rocha S."/>
            <person name="Dunkov B.C."/>
            <person name="Dunn P."/>
            <person name="Durbin K.J."/>
            <person name="Evangelista C.C."/>
            <person name="Ferraz C."/>
            <person name="Ferriera S."/>
            <person name="Fleischmann W."/>
            <person name="Fosler C."/>
            <person name="Gabrielian A.E."/>
            <person name="Garg N.S."/>
            <person name="Gelbart W.M."/>
            <person name="Glasser K."/>
            <person name="Glodek A."/>
            <person name="Gong F."/>
            <person name="Gorrell J.H."/>
            <person name="Gu Z."/>
            <person name="Guan P."/>
            <person name="Harris M."/>
            <person name="Harris N.L."/>
            <person name="Harvey D.A."/>
            <person name="Heiman T.J."/>
            <person name="Hernandez J.R."/>
            <person name="Houck J."/>
            <person name="Hostin D."/>
            <person name="Houston K.A."/>
            <person name="Howland T.J."/>
            <person name="Wei M.-H."/>
            <person name="Ibegwam C."/>
            <person name="Jalali M."/>
            <person name="Kalush F."/>
            <person name="Karpen G.H."/>
            <person name="Ke Z."/>
            <person name="Kennison J.A."/>
            <person name="Ketchum K.A."/>
            <person name="Kimmel B.E."/>
            <person name="Kodira C.D."/>
            <person name="Kraft C.L."/>
            <person name="Kravitz S."/>
            <person name="Kulp D."/>
            <person name="Lai Z."/>
            <person name="Lasko P."/>
            <person name="Lei Y."/>
            <person name="Levitsky A.A."/>
            <person name="Li J.H."/>
            <person name="Li Z."/>
            <person name="Liang Y."/>
            <person name="Lin X."/>
            <person name="Liu X."/>
            <person name="Mattei B."/>
            <person name="McIntosh T.C."/>
            <person name="McLeod M.P."/>
            <person name="McPherson D."/>
            <person name="Merkulov G."/>
            <person name="Milshina N.V."/>
            <person name="Mobarry C."/>
            <person name="Morris J."/>
            <person name="Moshrefi A."/>
            <person name="Mount S.M."/>
            <person name="Moy M."/>
            <person name="Murphy B."/>
            <person name="Murphy L."/>
            <person name="Muzny D.M."/>
            <person name="Nelson D.L."/>
            <person name="Nelson D.R."/>
            <person name="Nelson K.A."/>
            <person name="Nixon K."/>
            <person name="Nusskern D.R."/>
            <person name="Pacleb J.M."/>
            <person name="Palazzolo M."/>
            <person name="Pittman G.S."/>
            <person name="Pan S."/>
            <person name="Pollard J."/>
            <person name="Puri V."/>
            <person name="Reese M.G."/>
            <person name="Reinert K."/>
            <person name="Remington K."/>
            <person name="Saunders R.D.C."/>
            <person name="Scheeler F."/>
            <person name="Shen H."/>
            <person name="Shue B.C."/>
            <person name="Siden-Kiamos I."/>
            <person name="Simpson M."/>
            <person name="Skupski M.P."/>
            <person name="Smith T.J."/>
            <person name="Spier E."/>
            <person name="Spradling A.C."/>
            <person name="Stapleton M."/>
            <person name="Strong R."/>
            <person name="Sun E."/>
            <person name="Svirskas R."/>
            <person name="Tector C."/>
            <person name="Turner R."/>
            <person name="Venter E."/>
            <person name="Wang A.H."/>
            <person name="Wang X."/>
            <person name="Wang Z.-Y."/>
            <person name="Wassarman D.A."/>
            <person name="Weinstock G.M."/>
            <person name="Weissenbach J."/>
            <person name="Williams S.M."/>
            <person name="Woodage T."/>
            <person name="Worley K.C."/>
            <person name="Wu D."/>
            <person name="Yang S."/>
            <person name="Yao Q.A."/>
            <person name="Ye J."/>
            <person name="Yeh R.-F."/>
            <person name="Zaveri J.S."/>
            <person name="Zhan M."/>
            <person name="Zhang G."/>
            <person name="Zhao Q."/>
            <person name="Zheng L."/>
            <person name="Zheng X.H."/>
            <person name="Zhong F.N."/>
            <person name="Zhong W."/>
            <person name="Zhou X."/>
            <person name="Zhu S.C."/>
            <person name="Zhu X."/>
            <person name="Smith H.O."/>
            <person name="Gibbs R.A."/>
            <person name="Myers E.W."/>
            <person name="Rubin G.M."/>
            <person name="Venter J.C."/>
        </authorList>
    </citation>
    <scope>NUCLEOTIDE SEQUENCE [LARGE SCALE GENOMIC DNA]</scope>
    <source>
        <strain evidence="7">Berkeley</strain>
    </source>
</reference>
<reference evidence="7" key="2">
    <citation type="journal article" date="2002" name="Genome Biol.">
        <title>Annotation of the Drosophila melanogaster euchromatic genome: a systematic review.</title>
        <authorList>
            <person name="Misra S."/>
            <person name="Crosby M.A."/>
            <person name="Mungall C.J."/>
            <person name="Matthews B.B."/>
            <person name="Campbell K.S."/>
            <person name="Hradecky P."/>
            <person name="Huang Y."/>
            <person name="Kaminker J.S."/>
            <person name="Millburn G.H."/>
            <person name="Prochnik S.E."/>
            <person name="Smith C.D."/>
            <person name="Tupy J.L."/>
            <person name="Whitfield E.J."/>
            <person name="Bayraktaroglu L."/>
            <person name="Berman B.P."/>
            <person name="Bettencourt B.R."/>
            <person name="Celniker S.E."/>
            <person name="de Grey A.D.N.J."/>
            <person name="Drysdale R.A."/>
            <person name="Harris N.L."/>
            <person name="Richter J."/>
            <person name="Russo S."/>
            <person name="Schroeder A.J."/>
            <person name="Shu S.Q."/>
            <person name="Stapleton M."/>
            <person name="Yamada C."/>
            <person name="Ashburner M."/>
            <person name="Gelbart W.M."/>
            <person name="Rubin G.M."/>
            <person name="Lewis S.E."/>
        </authorList>
    </citation>
    <scope>GENOME REANNOTATION</scope>
    <source>
        <strain evidence="7">Berkeley</strain>
    </source>
</reference>
<reference evidence="5" key="3">
    <citation type="journal article" date="2002" name="Genome Biol.">
        <title>A Drosophila full-length cDNA resource.</title>
        <authorList>
            <person name="Stapleton M."/>
            <person name="Carlson J.W."/>
            <person name="Brokstein P."/>
            <person name="Yu C."/>
            <person name="Champe M."/>
            <person name="George R.A."/>
            <person name="Guarin H."/>
            <person name="Kronmiller B."/>
            <person name="Pacleb J.M."/>
            <person name="Park S."/>
            <person name="Wan K.H."/>
            <person name="Rubin G.M."/>
            <person name="Celniker S.E."/>
        </authorList>
    </citation>
    <scope>NUCLEOTIDE SEQUENCE [LARGE SCALE MRNA]</scope>
    <source>
        <strain evidence="5">Berkeley</strain>
        <tissue evidence="5">Testis</tissue>
    </source>
</reference>
<reference evidence="4" key="4">
    <citation type="journal article" date="2020" name="PLoS Genet.">
        <title>DAnkrd49 and Bdbt act via Casein kinase Iepsilon to regulate planar polarity in Drosophila.</title>
        <authorList>
            <person name="Strutt H."/>
            <person name="Strutt D."/>
        </authorList>
    </citation>
    <scope>FUNCTION</scope>
    <scope>INTERACTION WITH BDBT</scope>
    <scope>SUBCELLULAR LOCATION</scope>
    <scope>DISRUPTION PHENOTYPE</scope>
    <scope>MUTAGENESIS OF HIS-87 AND ALA-156</scope>
</reference>
<evidence type="ECO:0000255" key="1"/>
<evidence type="ECO:0000269" key="2">
    <source>
    </source>
</evidence>
<evidence type="ECO:0000303" key="3">
    <source>
    </source>
</evidence>
<evidence type="ECO:0000305" key="4"/>
<evidence type="ECO:0000312" key="5">
    <source>
        <dbReference type="EMBL" id="AAL48452.2"/>
    </source>
</evidence>
<evidence type="ECO:0000312" key="6">
    <source>
        <dbReference type="FlyBase" id="FBgn0261881"/>
    </source>
</evidence>
<evidence type="ECO:0000312" key="7">
    <source>
        <dbReference type="Proteomes" id="UP000000803"/>
    </source>
</evidence>
<protein>
    <recommendedName>
        <fullName evidence="3">Ankyrin repeat domain-containing protein 49</fullName>
    </recommendedName>
</protein>
<dbReference type="EMBL" id="AE014134">
    <property type="protein sequence ID" value="AAF53427.1"/>
    <property type="molecule type" value="Genomic_DNA"/>
</dbReference>
<dbReference type="EMBL" id="AY070830">
    <property type="protein sequence ID" value="AAL48452.2"/>
    <property type="status" value="ALT_INIT"/>
    <property type="molecule type" value="mRNA"/>
</dbReference>
<dbReference type="RefSeq" id="NP_609735.1">
    <property type="nucleotide sequence ID" value="NM_135891.4"/>
</dbReference>
<dbReference type="SMR" id="Q9V3Y0"/>
<dbReference type="FunCoup" id="Q9V3Y0">
    <property type="interactions" value="488"/>
</dbReference>
<dbReference type="IntAct" id="Q9V3Y0">
    <property type="interactions" value="1"/>
</dbReference>
<dbReference type="STRING" id="7227.FBpp0080287"/>
<dbReference type="PaxDb" id="7227-FBpp0080287"/>
<dbReference type="DNASU" id="34874"/>
<dbReference type="EnsemblMetazoa" id="FBtr0080728">
    <property type="protein sequence ID" value="FBpp0080287"/>
    <property type="gene ID" value="FBgn0261881"/>
</dbReference>
<dbReference type="GeneID" id="34874"/>
<dbReference type="KEGG" id="dme:Dmel_CG4140"/>
<dbReference type="UCSC" id="CG4140-RA">
    <property type="organism name" value="d. melanogaster"/>
</dbReference>
<dbReference type="AGR" id="FB:FBgn0261881"/>
<dbReference type="CTD" id="54851"/>
<dbReference type="FlyBase" id="FBgn0261881">
    <property type="gene designation" value="Ankrd49"/>
</dbReference>
<dbReference type="VEuPathDB" id="VectorBase:FBgn0261881"/>
<dbReference type="eggNOG" id="KOG0512">
    <property type="taxonomic scope" value="Eukaryota"/>
</dbReference>
<dbReference type="GeneTree" id="ENSGT00390000003919"/>
<dbReference type="HOGENOM" id="CLU_000134_19_0_1"/>
<dbReference type="InParanoid" id="Q9V3Y0"/>
<dbReference type="OMA" id="NRYVKPD"/>
<dbReference type="OrthoDB" id="19174at2759"/>
<dbReference type="PhylomeDB" id="Q9V3Y0"/>
<dbReference type="Reactome" id="R-DME-8951664">
    <property type="pathway name" value="Neddylation"/>
</dbReference>
<dbReference type="Reactome" id="R-DME-983168">
    <property type="pathway name" value="Antigen processing: Ubiquitination &amp; Proteasome degradation"/>
</dbReference>
<dbReference type="BioGRID-ORCS" id="34874">
    <property type="hits" value="0 hits in 1 CRISPR screen"/>
</dbReference>
<dbReference type="ChiTaRS" id="RpS3A">
    <property type="organism name" value="fly"/>
</dbReference>
<dbReference type="GenomeRNAi" id="34874"/>
<dbReference type="PRO" id="PR:Q9V3Y0"/>
<dbReference type="Proteomes" id="UP000000803">
    <property type="component" value="Chromosome 2L"/>
</dbReference>
<dbReference type="Bgee" id="FBgn0261881">
    <property type="expression patterns" value="Expressed in adult anterior midgut class I enteroendocrine cell in adult midgut (Drosophila) and 67 other cell types or tissues"/>
</dbReference>
<dbReference type="ExpressionAtlas" id="Q9V3Y0">
    <property type="expression patterns" value="baseline and differential"/>
</dbReference>
<dbReference type="GO" id="GO:0005829">
    <property type="term" value="C:cytosol"/>
    <property type="evidence" value="ECO:0000314"/>
    <property type="project" value="FlyBase"/>
</dbReference>
<dbReference type="GO" id="GO:0005886">
    <property type="term" value="C:plasma membrane"/>
    <property type="evidence" value="ECO:0007669"/>
    <property type="project" value="UniProtKB-SubCell"/>
</dbReference>
<dbReference type="GO" id="GO:0090175">
    <property type="term" value="P:regulation of establishment of planar polarity"/>
    <property type="evidence" value="ECO:0000315"/>
    <property type="project" value="FlyBase"/>
</dbReference>
<dbReference type="FunFam" id="1.25.40.20:FF:000437">
    <property type="entry name" value="Lethal (2) 35Be"/>
    <property type="match status" value="1"/>
</dbReference>
<dbReference type="Gene3D" id="1.25.40.20">
    <property type="entry name" value="Ankyrin repeat-containing domain"/>
    <property type="match status" value="2"/>
</dbReference>
<dbReference type="InterPro" id="IPR002110">
    <property type="entry name" value="Ankyrin_rpt"/>
</dbReference>
<dbReference type="InterPro" id="IPR036770">
    <property type="entry name" value="Ankyrin_rpt-contain_sf"/>
</dbReference>
<dbReference type="PANTHER" id="PTHR24198">
    <property type="entry name" value="ANKYRIN REPEAT AND PROTEIN KINASE DOMAIN-CONTAINING PROTEIN"/>
    <property type="match status" value="1"/>
</dbReference>
<dbReference type="PANTHER" id="PTHR24198:SF165">
    <property type="entry name" value="ANKYRIN REPEAT-CONTAINING PROTEIN-RELATED"/>
    <property type="match status" value="1"/>
</dbReference>
<dbReference type="Pfam" id="PF12796">
    <property type="entry name" value="Ank_2"/>
    <property type="match status" value="1"/>
</dbReference>
<dbReference type="Pfam" id="PF13637">
    <property type="entry name" value="Ank_4"/>
    <property type="match status" value="1"/>
</dbReference>
<dbReference type="PRINTS" id="PR01415">
    <property type="entry name" value="ANKYRIN"/>
</dbReference>
<dbReference type="SMART" id="SM00248">
    <property type="entry name" value="ANK"/>
    <property type="match status" value="2"/>
</dbReference>
<dbReference type="SUPFAM" id="SSF48403">
    <property type="entry name" value="Ankyrin repeat"/>
    <property type="match status" value="1"/>
</dbReference>
<dbReference type="PROSITE" id="PS50297">
    <property type="entry name" value="ANK_REP_REGION"/>
    <property type="match status" value="2"/>
</dbReference>
<dbReference type="PROSITE" id="PS50088">
    <property type="entry name" value="ANK_REPEAT"/>
    <property type="match status" value="2"/>
</dbReference>
<sequence>MGDYDSDDEKSQVEKLRHAKVPRGMFVSGWDDDADELIEEDKNPQSSIERMILWAVNENRISEVREILKLDADTVNAKDNDGYTPLHRAAYNNFVDMAKLLLQYHANPNARTELGWTPLHSACKWNNADCAHLLLQFGADVNAESDGKQTPLHITATVSNCRNTATVLLLDRYIQPRKENNSEELASVIARRTGMSFPIFESGEEAYDCETGLID</sequence>
<feature type="chain" id="PRO_0000459361" description="Ankyrin repeat domain-containing protein 49">
    <location>
        <begin position="1"/>
        <end position="215"/>
    </location>
</feature>
<feature type="repeat" description="ANK 1" evidence="1">
    <location>
        <begin position="81"/>
        <end position="110"/>
    </location>
</feature>
<feature type="repeat" description="ANK 2" evidence="1">
    <location>
        <begin position="114"/>
        <end position="143"/>
    </location>
</feature>
<feature type="mutagenesis site" description="Lethal. Pupal wings containing clones display reduced levels of dsh, reduced asymmetric localization of stan, delayed trichome initiation, and formation of trichomes in the cell center rather than at the distal cell edge; when associated with T-156." evidence="2">
    <original>H</original>
    <variation>Y</variation>
    <location>
        <position position="87"/>
    </location>
</feature>
<feature type="mutagenesis site" description="Lethal. Pupal wings containing clones display reduced levels of dsh, reduced asymmetric localization of stan, delayed trichome initiation, and formation of trichomes in the cell center rather than at the distal cell edge; when associated with A-87." evidence="2">
    <original>A</original>
    <variation>T</variation>
    <location>
        <position position="156"/>
    </location>
</feature>
<organism evidence="7">
    <name type="scientific">Drosophila melanogaster</name>
    <name type="common">Fruit fly</name>
    <dbReference type="NCBI Taxonomy" id="7227"/>
    <lineage>
        <taxon>Eukaryota</taxon>
        <taxon>Metazoa</taxon>
        <taxon>Ecdysozoa</taxon>
        <taxon>Arthropoda</taxon>
        <taxon>Hexapoda</taxon>
        <taxon>Insecta</taxon>
        <taxon>Pterygota</taxon>
        <taxon>Neoptera</taxon>
        <taxon>Endopterygota</taxon>
        <taxon>Diptera</taxon>
        <taxon>Brachycera</taxon>
        <taxon>Muscomorpha</taxon>
        <taxon>Ephydroidea</taxon>
        <taxon>Drosophilidae</taxon>
        <taxon>Drosophila</taxon>
        <taxon>Sophophora</taxon>
    </lineage>
</organism>
<comment type="function">
    <text evidence="2">Required for regulating the establishment of planar cell polarity in the wing (PubMed:32750048). Forms a complex with Bdbt which likely functions in the regulation of planar polarity by promoting the activity of Dco during planar polarity establishment (PubMed:32750048). Within the complex, probably functions to stabilize Bdbt, while Bdbt directly promotes Dco activity in regulating phosphorylation of core proteins such as dsh, and asymmetric localization (PubMed:32750048).</text>
</comment>
<comment type="subunit">
    <text evidence="2">Interacts with Bdbt; interaction promotes the stability of both complex members.</text>
</comment>
<comment type="subcellular location">
    <subcellularLocation>
        <location evidence="2">Cytoplasm</location>
        <location evidence="2">Cytosol</location>
    </subcellularLocation>
    <subcellularLocation>
        <location evidence="2">Cell membrane</location>
        <topology evidence="2">Peripheral membrane protein</topology>
        <orientation evidence="2">Cytoplasmic side</orientation>
    </subcellularLocation>
</comment>
<comment type="disruption phenotype">
    <text evidence="2">Lethal (PubMed:32750048). RNAi-mediated knockdown in the wing disrupts cell polarity and decreases levels of dsh phosphorylation (PubMed:32750048).</text>
</comment>
<comment type="sequence caution" evidence="4">
    <conflict type="erroneous initiation">
        <sequence resource="EMBL-CDS" id="AAL48452"/>
    </conflict>
    <text>Extended N-terminus.</text>
</comment>